<comment type="cofactor">
    <cofactor evidence="1">
        <name>Zn(2+)</name>
        <dbReference type="ChEBI" id="CHEBI:29105"/>
    </cofactor>
    <text evidence="1">Binds 1 zinc ion per subunit.</text>
</comment>
<comment type="subcellular location">
    <subcellularLocation>
        <location evidence="1">Cell inner membrane</location>
        <topology evidence="1">Multi-pass membrane protein</topology>
    </subcellularLocation>
</comment>
<comment type="similarity">
    <text evidence="1">Belongs to the peptidase M48B family.</text>
</comment>
<name>HTPX_AZOC5</name>
<protein>
    <recommendedName>
        <fullName evidence="1">Protease HtpX homolog</fullName>
        <ecNumber evidence="1">3.4.24.-</ecNumber>
    </recommendedName>
</protein>
<sequence length="312" mass="32736">MNYMRTAVLLAGLTALFMVVGFAIGGKGGMMVALLVAAGMNLFSYWYADKIVLGMYGAREVDMRTAPEFVAMVAELARRAELPMPKVYIIDNPQPNAFATGRNPQNAAVAATTGLLQTLNPDEVAGVMAHELAHVKHHDTLTMTITASIAGAISMLANFGLFFGGGNRESNNPFGGISAILMAILAPIAAMVVQMAISRSREYEADRGGAEICGQPLALASALAKIAGGAHAVPNYAAEANPATAHMFIINPLSGARMDNLFSTHPNTENRIAALEDLARQMGGYRPAPARAAPARGPWGGNTGGTRRGPWG</sequence>
<keyword id="KW-0997">Cell inner membrane</keyword>
<keyword id="KW-1003">Cell membrane</keyword>
<keyword id="KW-0378">Hydrolase</keyword>
<keyword id="KW-0472">Membrane</keyword>
<keyword id="KW-0479">Metal-binding</keyword>
<keyword id="KW-0482">Metalloprotease</keyword>
<keyword id="KW-0645">Protease</keyword>
<keyword id="KW-1185">Reference proteome</keyword>
<keyword id="KW-0812">Transmembrane</keyword>
<keyword id="KW-1133">Transmembrane helix</keyword>
<keyword id="KW-0862">Zinc</keyword>
<evidence type="ECO:0000255" key="1">
    <source>
        <dbReference type="HAMAP-Rule" id="MF_00188"/>
    </source>
</evidence>
<evidence type="ECO:0000256" key="2">
    <source>
        <dbReference type="SAM" id="MobiDB-lite"/>
    </source>
</evidence>
<reference key="1">
    <citation type="submission" date="2007-04" db="EMBL/GenBank/DDBJ databases">
        <title>Complete genome sequence of the nitrogen-fixing bacterium Azorhizobium caulinodans ORS571.</title>
        <authorList>
            <person name="Lee K.B."/>
            <person name="Backer P.D."/>
            <person name="Aono T."/>
            <person name="Liu C.T."/>
            <person name="Suzuki S."/>
            <person name="Suzuki T."/>
            <person name="Kaneko T."/>
            <person name="Yamada M."/>
            <person name="Tabata S."/>
            <person name="Kupfer D.M."/>
            <person name="Najar F.Z."/>
            <person name="Wiley G.B."/>
            <person name="Roe B."/>
            <person name="Binnewies T."/>
            <person name="Ussery D."/>
            <person name="Vereecke D."/>
            <person name="Gevers D."/>
            <person name="Holsters M."/>
            <person name="Oyaizu H."/>
        </authorList>
    </citation>
    <scope>NUCLEOTIDE SEQUENCE [LARGE SCALE GENOMIC DNA]</scope>
    <source>
        <strain>ATCC 43989 / DSM 5975 / JCM 20966 / LMG 6465 / NBRC 14845 / NCIMB 13405 / ORS 571</strain>
    </source>
</reference>
<proteinExistence type="inferred from homology"/>
<gene>
    <name evidence="1" type="primary">htpX</name>
    <name type="ordered locus">AZC_4701</name>
</gene>
<accession>A8I246</accession>
<dbReference type="EC" id="3.4.24.-" evidence="1"/>
<dbReference type="EMBL" id="AP009384">
    <property type="protein sequence ID" value="BAF90699.1"/>
    <property type="molecule type" value="Genomic_DNA"/>
</dbReference>
<dbReference type="RefSeq" id="WP_012173220.1">
    <property type="nucleotide sequence ID" value="NC_009937.1"/>
</dbReference>
<dbReference type="SMR" id="A8I246"/>
<dbReference type="STRING" id="438753.AZC_4701"/>
<dbReference type="MEROPS" id="M48.004"/>
<dbReference type="KEGG" id="azc:AZC_4701"/>
<dbReference type="eggNOG" id="COG0501">
    <property type="taxonomic scope" value="Bacteria"/>
</dbReference>
<dbReference type="HOGENOM" id="CLU_042266_3_0_5"/>
<dbReference type="Proteomes" id="UP000000270">
    <property type="component" value="Chromosome"/>
</dbReference>
<dbReference type="GO" id="GO:0005886">
    <property type="term" value="C:plasma membrane"/>
    <property type="evidence" value="ECO:0007669"/>
    <property type="project" value="UniProtKB-SubCell"/>
</dbReference>
<dbReference type="GO" id="GO:0004222">
    <property type="term" value="F:metalloendopeptidase activity"/>
    <property type="evidence" value="ECO:0007669"/>
    <property type="project" value="UniProtKB-UniRule"/>
</dbReference>
<dbReference type="GO" id="GO:0008270">
    <property type="term" value="F:zinc ion binding"/>
    <property type="evidence" value="ECO:0007669"/>
    <property type="project" value="UniProtKB-UniRule"/>
</dbReference>
<dbReference type="GO" id="GO:0006508">
    <property type="term" value="P:proteolysis"/>
    <property type="evidence" value="ECO:0007669"/>
    <property type="project" value="UniProtKB-KW"/>
</dbReference>
<dbReference type="CDD" id="cd07336">
    <property type="entry name" value="M48B_HtpX_like"/>
    <property type="match status" value="1"/>
</dbReference>
<dbReference type="Gene3D" id="3.30.2010.10">
    <property type="entry name" value="Metalloproteases ('zincins'), catalytic domain"/>
    <property type="match status" value="1"/>
</dbReference>
<dbReference type="HAMAP" id="MF_00188">
    <property type="entry name" value="Pept_M48_protease_HtpX"/>
    <property type="match status" value="1"/>
</dbReference>
<dbReference type="InterPro" id="IPR050083">
    <property type="entry name" value="HtpX_protease"/>
</dbReference>
<dbReference type="InterPro" id="IPR022919">
    <property type="entry name" value="Pept_M48_protease_HtpX"/>
</dbReference>
<dbReference type="InterPro" id="IPR001915">
    <property type="entry name" value="Peptidase_M48"/>
</dbReference>
<dbReference type="NCBIfam" id="NF002363">
    <property type="entry name" value="PRK01345.1"/>
    <property type="match status" value="1"/>
</dbReference>
<dbReference type="NCBIfam" id="NF002826">
    <property type="entry name" value="PRK03001.1"/>
    <property type="match status" value="1"/>
</dbReference>
<dbReference type="PANTHER" id="PTHR43221">
    <property type="entry name" value="PROTEASE HTPX"/>
    <property type="match status" value="1"/>
</dbReference>
<dbReference type="PANTHER" id="PTHR43221:SF1">
    <property type="entry name" value="PROTEASE HTPX"/>
    <property type="match status" value="1"/>
</dbReference>
<dbReference type="Pfam" id="PF01435">
    <property type="entry name" value="Peptidase_M48"/>
    <property type="match status" value="1"/>
</dbReference>
<feature type="chain" id="PRO_1000071688" description="Protease HtpX homolog">
    <location>
        <begin position="1"/>
        <end position="312"/>
    </location>
</feature>
<feature type="transmembrane region" description="Helical" evidence="1">
    <location>
        <begin position="6"/>
        <end position="26"/>
    </location>
</feature>
<feature type="transmembrane region" description="Helical" evidence="1">
    <location>
        <begin position="28"/>
        <end position="48"/>
    </location>
</feature>
<feature type="transmembrane region" description="Helical" evidence="1">
    <location>
        <begin position="145"/>
        <end position="165"/>
    </location>
</feature>
<feature type="transmembrane region" description="Helical" evidence="1">
    <location>
        <begin position="173"/>
        <end position="193"/>
    </location>
</feature>
<feature type="region of interest" description="Disordered" evidence="2">
    <location>
        <begin position="287"/>
        <end position="312"/>
    </location>
</feature>
<feature type="compositionally biased region" description="Low complexity" evidence="2">
    <location>
        <begin position="287"/>
        <end position="297"/>
    </location>
</feature>
<feature type="compositionally biased region" description="Gly residues" evidence="2">
    <location>
        <begin position="298"/>
        <end position="312"/>
    </location>
</feature>
<feature type="active site" evidence="1">
    <location>
        <position position="131"/>
    </location>
</feature>
<feature type="binding site" evidence="1">
    <location>
        <position position="130"/>
    </location>
    <ligand>
        <name>Zn(2+)</name>
        <dbReference type="ChEBI" id="CHEBI:29105"/>
        <note>catalytic</note>
    </ligand>
</feature>
<feature type="binding site" evidence="1">
    <location>
        <position position="134"/>
    </location>
    <ligand>
        <name>Zn(2+)</name>
        <dbReference type="ChEBI" id="CHEBI:29105"/>
        <note>catalytic</note>
    </ligand>
</feature>
<feature type="binding site" evidence="1">
    <location>
        <position position="202"/>
    </location>
    <ligand>
        <name>Zn(2+)</name>
        <dbReference type="ChEBI" id="CHEBI:29105"/>
        <note>catalytic</note>
    </ligand>
</feature>
<organism>
    <name type="scientific">Azorhizobium caulinodans (strain ATCC 43989 / DSM 5975 / JCM 20966 / LMG 6465 / NBRC 14845 / NCIMB 13405 / ORS 571)</name>
    <dbReference type="NCBI Taxonomy" id="438753"/>
    <lineage>
        <taxon>Bacteria</taxon>
        <taxon>Pseudomonadati</taxon>
        <taxon>Pseudomonadota</taxon>
        <taxon>Alphaproteobacteria</taxon>
        <taxon>Hyphomicrobiales</taxon>
        <taxon>Xanthobacteraceae</taxon>
        <taxon>Azorhizobium</taxon>
    </lineage>
</organism>